<reference key="1">
    <citation type="submission" date="2006-09" db="EMBL/GenBank/DDBJ databases">
        <authorList>
            <consortium name="NIH - Zebrafish Gene Collection (ZGC) project"/>
        </authorList>
    </citation>
    <scope>NUCLEOTIDE SEQUENCE [LARGE SCALE MRNA]</scope>
    <source>
        <tissue>Ovary</tissue>
    </source>
</reference>
<reference key="2">
    <citation type="journal article" date="2007" name="Mol. Genet. Genomics">
        <title>A shifted repertoire of endocannabinoid genes in the zebrafish (Danio rerio).</title>
        <authorList>
            <person name="McPartland J.M."/>
            <person name="Glass M."/>
            <person name="Matias I."/>
            <person name="Norris R.W."/>
            <person name="Kilpatrick C.W."/>
        </authorList>
    </citation>
    <scope>IDENTIFICATION AS FAAH2B</scope>
</reference>
<organism>
    <name type="scientific">Danio rerio</name>
    <name type="common">Zebrafish</name>
    <name type="synonym">Brachydanio rerio</name>
    <dbReference type="NCBI Taxonomy" id="7955"/>
    <lineage>
        <taxon>Eukaryota</taxon>
        <taxon>Metazoa</taxon>
        <taxon>Chordata</taxon>
        <taxon>Craniata</taxon>
        <taxon>Vertebrata</taxon>
        <taxon>Euteleostomi</taxon>
        <taxon>Actinopterygii</taxon>
        <taxon>Neopterygii</taxon>
        <taxon>Teleostei</taxon>
        <taxon>Ostariophysi</taxon>
        <taxon>Cypriniformes</taxon>
        <taxon>Danionidae</taxon>
        <taxon>Danioninae</taxon>
        <taxon>Danio</taxon>
    </lineage>
</organism>
<evidence type="ECO:0000250" key="1"/>
<evidence type="ECO:0000255" key="2"/>
<evidence type="ECO:0000305" key="3"/>
<comment type="catalytic activity">
    <reaction>
        <text>N-(5Z,8Z,11Z,14Z-eicosatetraenoyl)-ethanolamine + H2O = ethanolamine + (5Z,8Z,11Z,14Z)-eicosatetraenoate</text>
        <dbReference type="Rhea" id="RHEA:26136"/>
        <dbReference type="ChEBI" id="CHEBI:2700"/>
        <dbReference type="ChEBI" id="CHEBI:15377"/>
        <dbReference type="ChEBI" id="CHEBI:32395"/>
        <dbReference type="ChEBI" id="CHEBI:57603"/>
        <dbReference type="EC" id="3.5.1.99"/>
    </reaction>
</comment>
<comment type="catalytic activity">
    <reaction>
        <text>(9Z)-octadecenamide + H2O = (9Z)-octadecenoate + NH4(+)</text>
        <dbReference type="Rhea" id="RHEA:26506"/>
        <dbReference type="ChEBI" id="CHEBI:15377"/>
        <dbReference type="ChEBI" id="CHEBI:28938"/>
        <dbReference type="ChEBI" id="CHEBI:30823"/>
        <dbReference type="ChEBI" id="CHEBI:116314"/>
        <dbReference type="EC" id="3.5.1.99"/>
    </reaction>
</comment>
<comment type="subcellular location">
    <subcellularLocation>
        <location evidence="3">Membrane</location>
        <topology evidence="3">Single-pass membrane protein</topology>
    </subcellularLocation>
</comment>
<comment type="similarity">
    <text evidence="3">Belongs to the amidase family.</text>
</comment>
<keyword id="KW-0378">Hydrolase</keyword>
<keyword id="KW-0442">Lipid degradation</keyword>
<keyword id="KW-0443">Lipid metabolism</keyword>
<keyword id="KW-0472">Membrane</keyword>
<keyword id="KW-1185">Reference proteome</keyword>
<keyword id="KW-0812">Transmembrane</keyword>
<keyword id="KW-1133">Transmembrane helix</keyword>
<sequence>MGLTLGERVQHCLLVLVSGLFLALFRLLSPGTKRPKHLPPITNPLLTLSAVQLAEKIRRGEVSSVEVVQAYIDRIQEVNPLLNALIKDRFSAALLEAARADKLIKEENGGEEVLRNQFPLLGVPMSVKESFGLQGMPNSGGLKSRGKVLASVDAPPVALLKRAGAIPLGVTNTSELCMWMESNNHLYGITSNPYNLERICGGSSGGEGSIIGGGASVFGIGSDIGGSIRMPCFFNGIFGHKPSRGVVSNDNQFPRCSGLQNEYTGSGPMCRYAEDLLPLLKIMAGPTADKLTLSKAVDLKKLRFFTIVDDGGSPLTSPVDRQLVEVQKRVAARLEADLGVTVQEVNFPQLKYSYQIWDTFLALPDKDGKPPEAFVELMADGGSVWPVWELIKRIFGRSEHTVAAIGLALMESSHSSKSSEFILKQKEDLQREMEDLLGTDGVLLYPSHPLLAPKHHHPLFMPFNFSYTGILNILGLPVTQCPLGLSKERLPLGVQVVAGLCQDHLTLAMALYLEKAFGGWVDPGVV</sequence>
<protein>
    <recommendedName>
        <fullName>Fatty-acid amide hydrolase 2-B</fullName>
        <ecNumber>3.5.1.99</ecNumber>
    </recommendedName>
</protein>
<accession>Q05AM4</accession>
<feature type="chain" id="PRO_0000291995" description="Fatty-acid amide hydrolase 2-B">
    <location>
        <begin position="1"/>
        <end position="526"/>
    </location>
</feature>
<feature type="transmembrane region" description="Helical" evidence="2">
    <location>
        <begin position="12"/>
        <end position="32"/>
    </location>
</feature>
<feature type="active site" description="Charge relay system" evidence="1">
    <location>
        <position position="128"/>
    </location>
</feature>
<feature type="active site" description="Charge relay system" evidence="1">
    <location>
        <position position="203"/>
    </location>
</feature>
<feature type="active site" description="Acyl-ester intermediate" evidence="1">
    <location>
        <position position="227"/>
    </location>
</feature>
<name>FAH2B_DANRE</name>
<gene>
    <name type="primary">faah2b</name>
    <name type="ORF">zgc:153568</name>
</gene>
<dbReference type="EC" id="3.5.1.99"/>
<dbReference type="EMBL" id="BC124392">
    <property type="protein sequence ID" value="AAI24393.1"/>
    <property type="molecule type" value="mRNA"/>
</dbReference>
<dbReference type="RefSeq" id="NP_001070930.1">
    <property type="nucleotide sequence ID" value="NM_001077462.1"/>
</dbReference>
<dbReference type="SMR" id="Q05AM4"/>
<dbReference type="FunCoup" id="Q05AM4">
    <property type="interactions" value="142"/>
</dbReference>
<dbReference type="STRING" id="7955.ENSDARP00000071507"/>
<dbReference type="PaxDb" id="7955-ENSDARP00000071507"/>
<dbReference type="GeneID" id="768298"/>
<dbReference type="KEGG" id="dre:768298"/>
<dbReference type="AGR" id="ZFIN:ZDB-GENE-061027-358"/>
<dbReference type="CTD" id="768298"/>
<dbReference type="ZFIN" id="ZDB-GENE-061027-358">
    <property type="gene designation" value="faah2b"/>
</dbReference>
<dbReference type="eggNOG" id="KOG1212">
    <property type="taxonomic scope" value="Eukaryota"/>
</dbReference>
<dbReference type="InParanoid" id="Q05AM4"/>
<dbReference type="OrthoDB" id="6428749at2759"/>
<dbReference type="PhylomeDB" id="Q05AM4"/>
<dbReference type="PRO" id="PR:Q05AM4"/>
<dbReference type="Proteomes" id="UP000000437">
    <property type="component" value="Alternate scaffold 7"/>
</dbReference>
<dbReference type="Proteomes" id="UP000000437">
    <property type="component" value="Chromosome 7"/>
</dbReference>
<dbReference type="GO" id="GO:0016020">
    <property type="term" value="C:membrane"/>
    <property type="evidence" value="ECO:0007669"/>
    <property type="project" value="UniProtKB-SubCell"/>
</dbReference>
<dbReference type="GO" id="GO:0017064">
    <property type="term" value="F:fatty acid amide hydrolase activity"/>
    <property type="evidence" value="ECO:0007669"/>
    <property type="project" value="UniProtKB-EC"/>
</dbReference>
<dbReference type="GO" id="GO:0016042">
    <property type="term" value="P:lipid catabolic process"/>
    <property type="evidence" value="ECO:0007669"/>
    <property type="project" value="UniProtKB-KW"/>
</dbReference>
<dbReference type="Gene3D" id="3.90.1300.10">
    <property type="entry name" value="Amidase signature (AS) domain"/>
    <property type="match status" value="1"/>
</dbReference>
<dbReference type="InterPro" id="IPR020556">
    <property type="entry name" value="Amidase_CS"/>
</dbReference>
<dbReference type="InterPro" id="IPR023631">
    <property type="entry name" value="Amidase_dom"/>
</dbReference>
<dbReference type="InterPro" id="IPR036928">
    <property type="entry name" value="AS_sf"/>
</dbReference>
<dbReference type="InterPro" id="IPR052739">
    <property type="entry name" value="FAAH2"/>
</dbReference>
<dbReference type="PANTHER" id="PTHR43372">
    <property type="entry name" value="FATTY-ACID AMIDE HYDROLASE"/>
    <property type="match status" value="1"/>
</dbReference>
<dbReference type="PANTHER" id="PTHR43372:SF4">
    <property type="entry name" value="FATTY-ACID AMIDE HYDROLASE 2"/>
    <property type="match status" value="1"/>
</dbReference>
<dbReference type="Pfam" id="PF01425">
    <property type="entry name" value="Amidase"/>
    <property type="match status" value="1"/>
</dbReference>
<dbReference type="PIRSF" id="PIRSF001221">
    <property type="entry name" value="Amidase_fungi"/>
    <property type="match status" value="1"/>
</dbReference>
<dbReference type="SUPFAM" id="SSF75304">
    <property type="entry name" value="Amidase signature (AS) enzymes"/>
    <property type="match status" value="1"/>
</dbReference>
<dbReference type="PROSITE" id="PS00571">
    <property type="entry name" value="AMIDASES"/>
    <property type="match status" value="1"/>
</dbReference>
<proteinExistence type="evidence at transcript level"/>